<protein>
    <recommendedName>
        <fullName>POU domain, class 3, transcription factor 3-A</fullName>
    </recommendedName>
    <alternativeName>
        <fullName>Brain-specific homeobox/POU domain protein 1.1</fullName>
        <shortName>Brain-1.1</shortName>
        <shortName>zfBrn-1.1</shortName>
    </alternativeName>
    <alternativeName>
        <fullName>Class III POU domain protein taichi</fullName>
    </alternativeName>
    <alternativeName>
        <fullName>POU domain protein 12</fullName>
        <shortName>ZP-12</shortName>
    </alternativeName>
</protein>
<keyword id="KW-0025">Alternative splicing</keyword>
<keyword id="KW-0217">Developmental protein</keyword>
<keyword id="KW-0238">DNA-binding</keyword>
<keyword id="KW-0371">Homeobox</keyword>
<keyword id="KW-0539">Nucleus</keyword>
<keyword id="KW-1185">Reference proteome</keyword>
<keyword id="KW-0804">Transcription</keyword>
<keyword id="KW-0805">Transcription regulation</keyword>
<comment type="function">
    <text>Transcription factor that may play important roles in patterning the embryonic brain.</text>
</comment>
<comment type="subcellular location">
    <subcellularLocation>
        <location>Nucleus</location>
    </subcellularLocation>
</comment>
<comment type="alternative products">
    <event type="alternative splicing"/>
    <isoform>
        <id>P56224-1</id>
        <name>1</name>
        <name>A</name>
        <sequence type="displayed"/>
    </isoform>
    <isoform>
        <id>P56224-2</id>
        <name>2</name>
        <name>U</name>
        <sequence type="described" ref="VSP_002340"/>
    </isoform>
    <isoform>
        <id>P56224-3</id>
        <name>3</name>
        <name>B</name>
        <sequence type="described" ref="VSP_002339"/>
    </isoform>
    <isoform>
        <id>P56224-4</id>
        <name>4</name>
        <sequence type="described" ref="VSP_012010"/>
    </isoform>
</comment>
<comment type="tissue specificity">
    <text evidence="4 5 6">Predominantly expressed in the embryonic and adult central nervous system. In adults, isoform 2 is expressed in the brain, ovary, basal cells of the skin and muscle satellite cells.</text>
</comment>
<comment type="developmental stage">
    <text evidence="4 5 6 7">Isoform 2 is expressed both maternally and zygotically, and is the major isoform in adults. Isoform 1 and isoform 3 are expressed zygotically. Maximal expression is after 1 to 2 days of development and becomes down-regulated as cells differentiate.</text>
</comment>
<comment type="similarity">
    <text evidence="12">Belongs to the POU transcription factor family. Class-3 subfamily.</text>
</comment>
<reference key="1">
    <citation type="journal article" date="1996" name="Nucleic Acids Res.">
        <title>Class III POU genes of zebrafish are predominantly expressed in the central nervous system.</title>
        <authorList>
            <person name="Spaniol P."/>
            <person name="Bornmann C."/>
            <person name="Hauptmann G."/>
            <person name="Gerster T."/>
        </authorList>
    </citation>
    <scope>NUCLEOTIDE SEQUENCE [MRNA] (ISOFORMS 1 AND 2)</scope>
    <scope>TISSUE SPECIFICITY</scope>
    <scope>DEVELOPMENTAL STAGE</scope>
    <source>
        <tissue>Embryo</tissue>
    </source>
</reference>
<reference key="2">
    <citation type="journal article" date="1998" name="Biochim. Biophys. Acta">
        <title>A new splicing variant of a type III POU gene from zebrafish encodes a POU protein with a distinct C-terminal.</title>
        <authorList>
            <person name="Lim J.H."/>
            <person name="He J."/>
            <person name="Korzh V."/>
            <person name="Gong Z."/>
        </authorList>
    </citation>
    <scope>NUCLEOTIDE SEQUENCE [MRNA] (ISOFORM 3)</scope>
    <scope>DEVELOPMENTAL STAGE</scope>
    <source>
        <tissue>Embryo</tissue>
    </source>
</reference>
<reference key="3">
    <citation type="journal article" date="1998" name="Mech. Dev.">
        <title>Progenitor cells in the adult zebrafish nervous system express a Brn-1-related POU gene, tai-ji.</title>
        <authorList>
            <person name="Huang S."/>
            <person name="Sato S."/>
        </authorList>
    </citation>
    <scope>NUCLEOTIDE SEQUENCE [GENOMIC DNA] (ISOFORM 2)</scope>
    <scope>TISSUE SPECIFICITY</scope>
    <scope>DEVELOPMENTAL STAGE</scope>
</reference>
<reference key="4">
    <citation type="journal article" date="2013" name="Nature">
        <title>The zebrafish reference genome sequence and its relationship to the human genome.</title>
        <authorList>
            <person name="Howe K."/>
            <person name="Clark M.D."/>
            <person name="Torroja C.F."/>
            <person name="Torrance J."/>
            <person name="Berthelot C."/>
            <person name="Muffato M."/>
            <person name="Collins J.E."/>
            <person name="Humphray S."/>
            <person name="McLaren K."/>
            <person name="Matthews L."/>
            <person name="McLaren S."/>
            <person name="Sealy I."/>
            <person name="Caccamo M."/>
            <person name="Churcher C."/>
            <person name="Scott C."/>
            <person name="Barrett J.C."/>
            <person name="Koch R."/>
            <person name="Rauch G.J."/>
            <person name="White S."/>
            <person name="Chow W."/>
            <person name="Kilian B."/>
            <person name="Quintais L.T."/>
            <person name="Guerra-Assuncao J.A."/>
            <person name="Zhou Y."/>
            <person name="Gu Y."/>
            <person name="Yen J."/>
            <person name="Vogel J.H."/>
            <person name="Eyre T."/>
            <person name="Redmond S."/>
            <person name="Banerjee R."/>
            <person name="Chi J."/>
            <person name="Fu B."/>
            <person name="Langley E."/>
            <person name="Maguire S.F."/>
            <person name="Laird G.K."/>
            <person name="Lloyd D."/>
            <person name="Kenyon E."/>
            <person name="Donaldson S."/>
            <person name="Sehra H."/>
            <person name="Almeida-King J."/>
            <person name="Loveland J."/>
            <person name="Trevanion S."/>
            <person name="Jones M."/>
            <person name="Quail M."/>
            <person name="Willey D."/>
            <person name="Hunt A."/>
            <person name="Burton J."/>
            <person name="Sims S."/>
            <person name="McLay K."/>
            <person name="Plumb B."/>
            <person name="Davis J."/>
            <person name="Clee C."/>
            <person name="Oliver K."/>
            <person name="Clark R."/>
            <person name="Riddle C."/>
            <person name="Elliot D."/>
            <person name="Threadgold G."/>
            <person name="Harden G."/>
            <person name="Ware D."/>
            <person name="Begum S."/>
            <person name="Mortimore B."/>
            <person name="Kerry G."/>
            <person name="Heath P."/>
            <person name="Phillimore B."/>
            <person name="Tracey A."/>
            <person name="Corby N."/>
            <person name="Dunn M."/>
            <person name="Johnson C."/>
            <person name="Wood J."/>
            <person name="Clark S."/>
            <person name="Pelan S."/>
            <person name="Griffiths G."/>
            <person name="Smith M."/>
            <person name="Glithero R."/>
            <person name="Howden P."/>
            <person name="Barker N."/>
            <person name="Lloyd C."/>
            <person name="Stevens C."/>
            <person name="Harley J."/>
            <person name="Holt K."/>
            <person name="Panagiotidis G."/>
            <person name="Lovell J."/>
            <person name="Beasley H."/>
            <person name="Henderson C."/>
            <person name="Gordon D."/>
            <person name="Auger K."/>
            <person name="Wright D."/>
            <person name="Collins J."/>
            <person name="Raisen C."/>
            <person name="Dyer L."/>
            <person name="Leung K."/>
            <person name="Robertson L."/>
            <person name="Ambridge K."/>
            <person name="Leongamornlert D."/>
            <person name="McGuire S."/>
            <person name="Gilderthorp R."/>
            <person name="Griffiths C."/>
            <person name="Manthravadi D."/>
            <person name="Nichol S."/>
            <person name="Barker G."/>
            <person name="Whitehead S."/>
            <person name="Kay M."/>
            <person name="Brown J."/>
            <person name="Murnane C."/>
            <person name="Gray E."/>
            <person name="Humphries M."/>
            <person name="Sycamore N."/>
            <person name="Barker D."/>
            <person name="Saunders D."/>
            <person name="Wallis J."/>
            <person name="Babbage A."/>
            <person name="Hammond S."/>
            <person name="Mashreghi-Mohammadi M."/>
            <person name="Barr L."/>
            <person name="Martin S."/>
            <person name="Wray P."/>
            <person name="Ellington A."/>
            <person name="Matthews N."/>
            <person name="Ellwood M."/>
            <person name="Woodmansey R."/>
            <person name="Clark G."/>
            <person name="Cooper J."/>
            <person name="Tromans A."/>
            <person name="Grafham D."/>
            <person name="Skuce C."/>
            <person name="Pandian R."/>
            <person name="Andrews R."/>
            <person name="Harrison E."/>
            <person name="Kimberley A."/>
            <person name="Garnett J."/>
            <person name="Fosker N."/>
            <person name="Hall R."/>
            <person name="Garner P."/>
            <person name="Kelly D."/>
            <person name="Bird C."/>
            <person name="Palmer S."/>
            <person name="Gehring I."/>
            <person name="Berger A."/>
            <person name="Dooley C.M."/>
            <person name="Ersan-Urun Z."/>
            <person name="Eser C."/>
            <person name="Geiger H."/>
            <person name="Geisler M."/>
            <person name="Karotki L."/>
            <person name="Kirn A."/>
            <person name="Konantz J."/>
            <person name="Konantz M."/>
            <person name="Oberlander M."/>
            <person name="Rudolph-Geiger S."/>
            <person name="Teucke M."/>
            <person name="Lanz C."/>
            <person name="Raddatz G."/>
            <person name="Osoegawa K."/>
            <person name="Zhu B."/>
            <person name="Rapp A."/>
            <person name="Widaa S."/>
            <person name="Langford C."/>
            <person name="Yang F."/>
            <person name="Schuster S.C."/>
            <person name="Carter N.P."/>
            <person name="Harrow J."/>
            <person name="Ning Z."/>
            <person name="Herrero J."/>
            <person name="Searle S.M."/>
            <person name="Enright A."/>
            <person name="Geisler R."/>
            <person name="Plasterk R.H."/>
            <person name="Lee C."/>
            <person name="Westerfield M."/>
            <person name="de Jong P.J."/>
            <person name="Zon L.I."/>
            <person name="Postlethwait J.H."/>
            <person name="Nusslein-Volhard C."/>
            <person name="Hubbard T.J."/>
            <person name="Roest Crollius H."/>
            <person name="Rogers J."/>
            <person name="Stemple D.L."/>
        </authorList>
    </citation>
    <scope>NUCLEOTIDE SEQUENCE [LARGE SCALE GENOMIC DNA]</scope>
    <source>
        <strain>Tuebingen</strain>
    </source>
</reference>
<reference key="5">
    <citation type="submission" date="2008-04" db="EMBL/GenBank/DDBJ databases">
        <authorList>
            <consortium name="NIH - Zebrafish Gene Collection (ZGC) project"/>
        </authorList>
    </citation>
    <scope>NUCLEOTIDE SEQUENCE [LARGE SCALE MRNA] (ISOFORMS 1; 3 AND 4)</scope>
    <source>
        <strain>AB</strain>
        <tissue>Embryo</tissue>
    </source>
</reference>
<reference key="6">
    <citation type="submission" date="1999-03" db="EMBL/GenBank/DDBJ databases">
        <title>Brn-1.1: an alternatively spliced class III POU domain gene expressed in the nervous system of the zebrafish.</title>
        <authorList>
            <person name="Shah D."/>
            <person name="Sampath K."/>
            <person name="Stuart G.W."/>
        </authorList>
    </citation>
    <scope>NUCLEOTIDE SEQUENCE [MRNA] OF 5-438 (ISOFORM 3)</scope>
    <source>
        <tissue>Embryo</tissue>
    </source>
</reference>
<reference key="7">
    <citation type="journal article" date="1996" name="Biochem. Biophys. Res. Commun.">
        <title>Developmental expression of class III and IV POU domain genes in the zebrafish.</title>
        <authorList>
            <person name="Sampath K."/>
            <person name="Stuart G.W."/>
        </authorList>
    </citation>
    <scope>NUCLEOTIDE SEQUENCE [GENOMIC DNA] OF 265-378</scope>
    <scope>TISSUE SPECIFICITY</scope>
    <scope>DEVELOPMENTAL STAGE</scope>
    <source>
        <tissue>Embryo</tissue>
    </source>
</reference>
<dbReference type="EMBL" id="Y07906">
    <property type="protein sequence ID" value="CAA69212.1"/>
    <property type="molecule type" value="mRNA"/>
</dbReference>
<dbReference type="EMBL" id="Y07906">
    <property type="protein sequence ID" value="CAA69213.1"/>
    <property type="molecule type" value="mRNA"/>
</dbReference>
<dbReference type="EMBL" id="AF039952">
    <property type="protein sequence ID" value="AAC41300.1"/>
    <property type="molecule type" value="mRNA"/>
</dbReference>
<dbReference type="EMBL" id="U77736">
    <property type="protein sequence ID" value="AAB84079.1"/>
    <property type="molecule type" value="Genomic_DNA"/>
</dbReference>
<dbReference type="EMBL" id="BX842683">
    <property type="protein sequence ID" value="CAQ14274.1"/>
    <property type="molecule type" value="Genomic_DNA"/>
</dbReference>
<dbReference type="EMBL" id="BX842683">
    <property type="protein sequence ID" value="CAQ14275.1"/>
    <property type="molecule type" value="Genomic_DNA"/>
</dbReference>
<dbReference type="EMBL" id="BX842683">
    <property type="protein sequence ID" value="CAQ14276.1"/>
    <property type="molecule type" value="Genomic_DNA"/>
</dbReference>
<dbReference type="EMBL" id="BC044354">
    <property type="protein sequence ID" value="AAH44354.1"/>
    <property type="molecule type" value="mRNA"/>
</dbReference>
<dbReference type="EMBL" id="BC058318">
    <property type="protein sequence ID" value="AAH58318.1"/>
    <property type="molecule type" value="mRNA"/>
</dbReference>
<dbReference type="EMBL" id="BC065961">
    <property type="protein sequence ID" value="AAH65961.1"/>
    <property type="molecule type" value="mRNA"/>
</dbReference>
<dbReference type="EMBL" id="BC070001">
    <property type="protein sequence ID" value="AAH70001.1"/>
    <property type="molecule type" value="mRNA"/>
</dbReference>
<dbReference type="EMBL" id="BC165334">
    <property type="protein sequence ID" value="AAI65334.1"/>
    <property type="molecule type" value="mRNA"/>
</dbReference>
<dbReference type="EMBL" id="U43898">
    <property type="protein sequence ID" value="AAB92590.2"/>
    <property type="molecule type" value="mRNA"/>
</dbReference>
<dbReference type="EMBL" id="U43656">
    <property type="protein sequence ID" value="AAB00433.1"/>
    <property type="molecule type" value="Genomic_DNA"/>
</dbReference>
<dbReference type="RefSeq" id="NP_001299616.1">
    <molecule id="P56224-1"/>
    <property type="nucleotide sequence ID" value="NM_001312687.1"/>
</dbReference>
<dbReference type="RefSeq" id="NP_571225.2">
    <molecule id="P56224-3"/>
    <property type="nucleotide sequence ID" value="NM_131150.2"/>
</dbReference>
<dbReference type="SMR" id="P56224"/>
<dbReference type="FunCoup" id="P56224">
    <property type="interactions" value="189"/>
</dbReference>
<dbReference type="STRING" id="7955.ENSDARP00000061592"/>
<dbReference type="PaxDb" id="7955-ENSDARP00000061592"/>
<dbReference type="Ensembl" id="ENSDART00000113914">
    <molecule id="P56224-1"/>
    <property type="protein sequence ID" value="ENSDARP00000103222"/>
    <property type="gene ID" value="ENSDARG00000042032"/>
</dbReference>
<dbReference type="GeneID" id="30386"/>
<dbReference type="KEGG" id="dre:30386"/>
<dbReference type="AGR" id="ZFIN:ZDB-GENE-980526-220"/>
<dbReference type="CTD" id="30386"/>
<dbReference type="ZFIN" id="ZDB-GENE-980526-220">
    <property type="gene designation" value="pou3f3a"/>
</dbReference>
<dbReference type="eggNOG" id="KOG3802">
    <property type="taxonomic scope" value="Eukaryota"/>
</dbReference>
<dbReference type="HOGENOM" id="CLU_013065_1_2_1"/>
<dbReference type="InParanoid" id="P56224"/>
<dbReference type="OMA" id="FMQGSIA"/>
<dbReference type="OrthoDB" id="6358449at2759"/>
<dbReference type="PhylomeDB" id="P56224"/>
<dbReference type="TreeFam" id="TF316413"/>
<dbReference type="PRO" id="PR:P56224"/>
<dbReference type="Proteomes" id="UP000000437">
    <property type="component" value="Chromosome 9"/>
</dbReference>
<dbReference type="Bgee" id="ENSDARG00000042032">
    <property type="expression patterns" value="Expressed in hypothalamus and 35 other cell types or tissues"/>
</dbReference>
<dbReference type="GO" id="GO:0005634">
    <property type="term" value="C:nucleus"/>
    <property type="evidence" value="ECO:0007669"/>
    <property type="project" value="UniProtKB-SubCell"/>
</dbReference>
<dbReference type="GO" id="GO:0000981">
    <property type="term" value="F:DNA-binding transcription factor activity, RNA polymerase II-specific"/>
    <property type="evidence" value="ECO:0000318"/>
    <property type="project" value="GO_Central"/>
</dbReference>
<dbReference type="GO" id="GO:0000978">
    <property type="term" value="F:RNA polymerase II cis-regulatory region sequence-specific DNA binding"/>
    <property type="evidence" value="ECO:0000318"/>
    <property type="project" value="GO_Central"/>
</dbReference>
<dbReference type="GO" id="GO:0007420">
    <property type="term" value="P:brain development"/>
    <property type="evidence" value="ECO:0007669"/>
    <property type="project" value="InterPro"/>
</dbReference>
<dbReference type="GO" id="GO:0006357">
    <property type="term" value="P:regulation of transcription by RNA polymerase II"/>
    <property type="evidence" value="ECO:0000318"/>
    <property type="project" value="GO_Central"/>
</dbReference>
<dbReference type="CDD" id="cd00086">
    <property type="entry name" value="homeodomain"/>
    <property type="match status" value="1"/>
</dbReference>
<dbReference type="FunFam" id="1.10.10.60:FF:000005">
    <property type="entry name" value="POU domain protein"/>
    <property type="match status" value="1"/>
</dbReference>
<dbReference type="FunFam" id="1.10.260.40:FF:000001">
    <property type="entry name" value="POU domain protein"/>
    <property type="match status" value="1"/>
</dbReference>
<dbReference type="Gene3D" id="1.10.10.60">
    <property type="entry name" value="Homeodomain-like"/>
    <property type="match status" value="1"/>
</dbReference>
<dbReference type="Gene3D" id="1.10.260.40">
    <property type="entry name" value="lambda repressor-like DNA-binding domains"/>
    <property type="match status" value="1"/>
</dbReference>
<dbReference type="InterPro" id="IPR001356">
    <property type="entry name" value="HD"/>
</dbReference>
<dbReference type="InterPro" id="IPR017970">
    <property type="entry name" value="Homeobox_CS"/>
</dbReference>
<dbReference type="InterPro" id="IPR009057">
    <property type="entry name" value="Homeodomain-like_sf"/>
</dbReference>
<dbReference type="InterPro" id="IPR010982">
    <property type="entry name" value="Lambda_DNA-bd_dom_sf"/>
</dbReference>
<dbReference type="InterPro" id="IPR013847">
    <property type="entry name" value="POU"/>
</dbReference>
<dbReference type="InterPro" id="IPR000327">
    <property type="entry name" value="POU_dom"/>
</dbReference>
<dbReference type="InterPro" id="IPR050255">
    <property type="entry name" value="POU_domain_TF"/>
</dbReference>
<dbReference type="InterPro" id="IPR016362">
    <property type="entry name" value="TF_POU_3"/>
</dbReference>
<dbReference type="PANTHER" id="PTHR11636">
    <property type="entry name" value="POU DOMAIN"/>
    <property type="match status" value="1"/>
</dbReference>
<dbReference type="PANTHER" id="PTHR11636:SF125">
    <property type="entry name" value="POU DOMAIN, CLASS 3, TRANSCRIPTION FACTOR 3"/>
    <property type="match status" value="1"/>
</dbReference>
<dbReference type="Pfam" id="PF00046">
    <property type="entry name" value="Homeodomain"/>
    <property type="match status" value="1"/>
</dbReference>
<dbReference type="Pfam" id="PF00157">
    <property type="entry name" value="Pou"/>
    <property type="match status" value="1"/>
</dbReference>
<dbReference type="PIRSF" id="PIRSF002629">
    <property type="entry name" value="Transcription_factor_POU"/>
    <property type="match status" value="1"/>
</dbReference>
<dbReference type="PRINTS" id="PR00028">
    <property type="entry name" value="POUDOMAIN"/>
</dbReference>
<dbReference type="SMART" id="SM00389">
    <property type="entry name" value="HOX"/>
    <property type="match status" value="1"/>
</dbReference>
<dbReference type="SMART" id="SM00352">
    <property type="entry name" value="POU"/>
    <property type="match status" value="1"/>
</dbReference>
<dbReference type="SUPFAM" id="SSF46689">
    <property type="entry name" value="Homeodomain-like"/>
    <property type="match status" value="1"/>
</dbReference>
<dbReference type="SUPFAM" id="SSF47413">
    <property type="entry name" value="lambda repressor-like DNA-binding domains"/>
    <property type="match status" value="1"/>
</dbReference>
<dbReference type="PROSITE" id="PS00027">
    <property type="entry name" value="HOMEOBOX_1"/>
    <property type="match status" value="1"/>
</dbReference>
<dbReference type="PROSITE" id="PS50071">
    <property type="entry name" value="HOMEOBOX_2"/>
    <property type="match status" value="1"/>
</dbReference>
<dbReference type="PROSITE" id="PS00035">
    <property type="entry name" value="POU_1"/>
    <property type="match status" value="1"/>
</dbReference>
<dbReference type="PROSITE" id="PS00465">
    <property type="entry name" value="POU_2"/>
    <property type="match status" value="1"/>
</dbReference>
<dbReference type="PROSITE" id="PS51179">
    <property type="entry name" value="POU_3"/>
    <property type="match status" value="1"/>
</dbReference>
<sequence>MATAASNPYLASSTILSSASLVHSESGGGGMQPGSGAVTSVSGGYRGDPTVKMVQSDFMQGAMAASNGGHMLSHAHQWVTSLPHAAAAAAAAAAAAAAEAGSPWSSSPVGMAGSPQQQDVKSSSNREDLHSGTALHHRPSHLGAHQSHQSAWGGTTASHISTITGGQQQSQQSLIYSQPGGFTVNGMLNPPGSLVHPGLMRGESPEMDHHHHHHHHQQQHPHHHHHHQHHAGVNSHDSHSDEDTPTSDDLEQFAKQFKQRRIKLGFTQADVGLALGTLYGNVFSQTTICRFEALQLSFKNMCKLKPLLNKWLEEADSTTGSPTSIDKIAAQGRKRKKRTSIEVSVKGALESHFLKCPKPSAQEITSLADNLQLEKEVVRVWFCNRRQKEKRMTPPGVPQTPEDVYTHAGNVSADTPPPSMDCKREFCGRLLKRCKFER</sequence>
<evidence type="ECO:0000255" key="1">
    <source>
        <dbReference type="PROSITE-ProRule" id="PRU00108"/>
    </source>
</evidence>
<evidence type="ECO:0000255" key="2">
    <source>
        <dbReference type="PROSITE-ProRule" id="PRU00530"/>
    </source>
</evidence>
<evidence type="ECO:0000256" key="3">
    <source>
        <dbReference type="SAM" id="MobiDB-lite"/>
    </source>
</evidence>
<evidence type="ECO:0000269" key="4">
    <source>
    </source>
</evidence>
<evidence type="ECO:0000269" key="5">
    <source>
    </source>
</evidence>
<evidence type="ECO:0000269" key="6">
    <source>
    </source>
</evidence>
<evidence type="ECO:0000269" key="7">
    <source>
    </source>
</evidence>
<evidence type="ECO:0000303" key="8">
    <source>
    </source>
</evidence>
<evidence type="ECO:0000303" key="9">
    <source>
    </source>
</evidence>
<evidence type="ECO:0000303" key="10">
    <source ref="5"/>
</evidence>
<evidence type="ECO:0000303" key="11">
    <source ref="6"/>
</evidence>
<evidence type="ECO:0000305" key="12"/>
<gene>
    <name type="primary">pou3f3a</name>
    <name type="synonym">brn-1.1</name>
    <name type="synonym">brn1.1</name>
    <name type="synonym">pou12</name>
    <name type="synonym">tai-ji</name>
    <name type="synonym">zp12</name>
    <name type="synonym">zp12pou</name>
    <name type="ORF">si:dkeyp-118h3.2</name>
</gene>
<feature type="chain" id="PRO_0000100731" description="POU domain, class 3, transcription factor 3-A">
    <location>
        <begin position="1"/>
        <end position="438"/>
    </location>
</feature>
<feature type="domain" description="POU-specific" evidence="2">
    <location>
        <begin position="242"/>
        <end position="316"/>
    </location>
</feature>
<feature type="DNA-binding region" description="Homeobox" evidence="1">
    <location>
        <begin position="334"/>
        <end position="393"/>
    </location>
</feature>
<feature type="region of interest" description="Disordered" evidence="3">
    <location>
        <begin position="22"/>
        <end position="43"/>
    </location>
</feature>
<feature type="region of interest" description="Disordered" evidence="3">
    <location>
        <begin position="102"/>
        <end position="172"/>
    </location>
</feature>
<feature type="region of interest" description="Disordered" evidence="3">
    <location>
        <begin position="186"/>
        <end position="248"/>
    </location>
</feature>
<feature type="compositionally biased region" description="Polar residues" evidence="3">
    <location>
        <begin position="103"/>
        <end position="123"/>
    </location>
</feature>
<feature type="compositionally biased region" description="Polar residues" evidence="3">
    <location>
        <begin position="146"/>
        <end position="159"/>
    </location>
</feature>
<feature type="compositionally biased region" description="Low complexity" evidence="3">
    <location>
        <begin position="160"/>
        <end position="172"/>
    </location>
</feature>
<feature type="compositionally biased region" description="Basic residues" evidence="3">
    <location>
        <begin position="210"/>
        <end position="230"/>
    </location>
</feature>
<feature type="splice variant" id="VSP_012010" description="In isoform 4." evidence="10">
    <original>EDVYTHAGNVSADTPPPSMDCKREFCGRLLKRCKFER</original>
    <variation>KDMDQCRQTLNIKQWKNLPQDTYQFYAQELYYSF</variation>
    <location>
        <begin position="402"/>
        <end position="438"/>
    </location>
</feature>
<feature type="splice variant" id="VSP_002339" description="In isoform 3." evidence="9 10 11">
    <original>VSADTPPPSMDCKREFCGRLLKRCKFER</original>
    <variation>GSFVVDYLKGASLKDEPDSNHNVTTASSYGQEILVH</variation>
    <location>
        <begin position="411"/>
        <end position="438"/>
    </location>
</feature>
<feature type="splice variant" id="VSP_002340" description="In isoform 2." evidence="8">
    <original>EFCGRLLKRCKFER</original>
    <variation>MFTET</variation>
    <location>
        <begin position="425"/>
        <end position="438"/>
    </location>
</feature>
<feature type="sequence conflict" description="In Ref. 5; AAH65961." evidence="12" ref="5">
    <original>S</original>
    <variation>F</variation>
    <location>
        <position position="26"/>
    </location>
</feature>
<feature type="sequence conflict" description="In Ref. 1; CAA69212/CAA69213, 2; AAC41300, 3; AAB84079, 5; AAH44354/AAH70001/AAI65334 and 6; AAB92590." evidence="12" ref="1 2 3 5 6">
    <location>
        <position position="222"/>
    </location>
</feature>
<feature type="sequence conflict" description="In Ref. 5; AAH70001." evidence="12" ref="5">
    <original>M</original>
    <variation>I</variation>
    <location>
        <position position="301"/>
    </location>
</feature>
<proteinExistence type="evidence at transcript level"/>
<accession>P56224</accession>
<accession>B0S7I5</accession>
<accession>B0S7I6</accession>
<accession>B0S7I7</accession>
<accession>B5DDP9</accession>
<accession>O57514</accession>
<accession>Q6IS23</accession>
<accession>Q6NZU9</accession>
<accession>Q6PE22</accession>
<accession>Q7ZU57</accession>
<accession>Q90433</accession>
<accession>Q90436</accession>
<organism>
    <name type="scientific">Danio rerio</name>
    <name type="common">Zebrafish</name>
    <name type="synonym">Brachydanio rerio</name>
    <dbReference type="NCBI Taxonomy" id="7955"/>
    <lineage>
        <taxon>Eukaryota</taxon>
        <taxon>Metazoa</taxon>
        <taxon>Chordata</taxon>
        <taxon>Craniata</taxon>
        <taxon>Vertebrata</taxon>
        <taxon>Euteleostomi</taxon>
        <taxon>Actinopterygii</taxon>
        <taxon>Neopterygii</taxon>
        <taxon>Teleostei</taxon>
        <taxon>Ostariophysi</taxon>
        <taxon>Cypriniformes</taxon>
        <taxon>Danionidae</taxon>
        <taxon>Danioninae</taxon>
        <taxon>Danio</taxon>
    </lineage>
</organism>
<name>P3F3A_DANRE</name>